<protein>
    <recommendedName>
        <fullName evidence="20">Endosomal/lysosomal proton channel TMEM175</fullName>
    </recommendedName>
    <alternativeName>
        <fullName evidence="20">Potassium channel TMEM175</fullName>
    </alternativeName>
    <alternativeName>
        <fullName evidence="17">Transmembrane protein 175</fullName>
        <shortName evidence="17 18 19">hTMEM175</shortName>
    </alternativeName>
</protein>
<accession>Q9BSA9</accession>
<accession>D3DVN4</accession>
<accession>Q8ND13</accession>
<evidence type="ECO:0000250" key="1">
    <source>
        <dbReference type="UniProtKB" id="K9UJK2"/>
    </source>
</evidence>
<evidence type="ECO:0000255" key="2"/>
<evidence type="ECO:0000256" key="3">
    <source>
        <dbReference type="SAM" id="MobiDB-lite"/>
    </source>
</evidence>
<evidence type="ECO:0000269" key="4">
    <source>
    </source>
</evidence>
<evidence type="ECO:0000269" key="5">
    <source>
    </source>
</evidence>
<evidence type="ECO:0000269" key="6">
    <source>
    </source>
</evidence>
<evidence type="ECO:0000269" key="7">
    <source>
    </source>
</evidence>
<evidence type="ECO:0000269" key="8">
    <source>
    </source>
</evidence>
<evidence type="ECO:0000269" key="9">
    <source>
    </source>
</evidence>
<evidence type="ECO:0000269" key="10">
    <source>
    </source>
</evidence>
<evidence type="ECO:0000269" key="11">
    <source>
    </source>
</evidence>
<evidence type="ECO:0000269" key="12">
    <source>
    </source>
</evidence>
<evidence type="ECO:0000269" key="13">
    <source>
    </source>
</evidence>
<evidence type="ECO:0000269" key="14">
    <source>
    </source>
</evidence>
<evidence type="ECO:0000269" key="15">
    <source>
    </source>
</evidence>
<evidence type="ECO:0000303" key="16">
    <source>
    </source>
</evidence>
<evidence type="ECO:0000303" key="17">
    <source>
    </source>
</evidence>
<evidence type="ECO:0000303" key="18">
    <source>
    </source>
</evidence>
<evidence type="ECO:0000303" key="19">
    <source>
    </source>
</evidence>
<evidence type="ECO:0000305" key="20"/>
<evidence type="ECO:0000305" key="21">
    <source>
    </source>
</evidence>
<evidence type="ECO:0000305" key="22">
    <source>
    </source>
</evidence>
<evidence type="ECO:0000305" key="23">
    <source>
    </source>
</evidence>
<evidence type="ECO:0000312" key="24">
    <source>
        <dbReference type="HGNC" id="HGNC:28709"/>
    </source>
</evidence>
<evidence type="ECO:0007744" key="25">
    <source>
        <dbReference type="PDB" id="6WC9"/>
    </source>
</evidence>
<evidence type="ECO:0007744" key="26">
    <source>
        <dbReference type="PDB" id="6WCA"/>
    </source>
</evidence>
<evidence type="ECO:0007744" key="27">
    <source>
        <dbReference type="PDB" id="6WCB"/>
    </source>
</evidence>
<evidence type="ECO:0007744" key="28">
    <source>
        <dbReference type="PDB" id="6WCC"/>
    </source>
</evidence>
<evidence type="ECO:0007744" key="29">
    <source>
        <dbReference type="PDB" id="8FY5"/>
    </source>
</evidence>
<evidence type="ECO:0007744" key="30">
    <source>
    </source>
</evidence>
<evidence type="ECO:0007829" key="31">
    <source>
        <dbReference type="PDB" id="6W8N"/>
    </source>
</evidence>
<evidence type="ECO:0007829" key="32">
    <source>
        <dbReference type="PDB" id="6W8O"/>
    </source>
</evidence>
<evidence type="ECO:0007829" key="33">
    <source>
        <dbReference type="PDB" id="6WC9"/>
    </source>
</evidence>
<evidence type="ECO:0007829" key="34">
    <source>
        <dbReference type="PDB" id="7LF6"/>
    </source>
</evidence>
<evidence type="ECO:0007829" key="35">
    <source>
        <dbReference type="PDB" id="7UNL"/>
    </source>
</evidence>
<evidence type="ECO:0007829" key="36">
    <source>
        <dbReference type="PDB" id="7UNM"/>
    </source>
</evidence>
<evidence type="ECO:0007829" key="37">
    <source>
        <dbReference type="PDB" id="8DHM"/>
    </source>
</evidence>
<evidence type="ECO:0007829" key="38">
    <source>
        <dbReference type="PDB" id="8FYF"/>
    </source>
</evidence>
<gene>
    <name evidence="17 24" type="primary">TMEM175</name>
</gene>
<keyword id="KW-0002">3D-structure</keyword>
<keyword id="KW-0025">Alternative splicing</keyword>
<keyword id="KW-0967">Endosome</keyword>
<keyword id="KW-0375">Hydrogen ion transport</keyword>
<keyword id="KW-0407">Ion channel</keyword>
<keyword id="KW-0406">Ion transport</keyword>
<keyword id="KW-0458">Lysosome</keyword>
<keyword id="KW-0472">Membrane</keyword>
<keyword id="KW-0523">Neurodegeneration</keyword>
<keyword id="KW-0907">Parkinson disease</keyword>
<keyword id="KW-0908">Parkinsonism</keyword>
<keyword id="KW-0597">Phosphoprotein</keyword>
<keyword id="KW-0630">Potassium</keyword>
<keyword id="KW-0631">Potassium channel</keyword>
<keyword id="KW-0633">Potassium transport</keyword>
<keyword id="KW-1267">Proteomics identification</keyword>
<keyword id="KW-1185">Reference proteome</keyword>
<keyword id="KW-0812">Transmembrane</keyword>
<keyword id="KW-1133">Transmembrane helix</keyword>
<keyword id="KW-0813">Transport</keyword>
<sequence>MSQPRTPEQALDTPGDCPPGRRDEDAGEGIQCSQRMLSFSDALLSIIATVMILPVTHTEISPEQQFDRSVQRLLATRIAVYLMTFLIVTVAWAAHTRLFQVVGKTDDTLALLNLACMMTITFLPYTFSLMVTFPDVPLGIFLFCVCVIAIGVVQALIVGYAFHFPHLLSPQIQRSAHRALYRRHVLGIVLQGPALCFAAAIFSLFFVPLSYLLMVTVILLPYVSKVTGWCRDRLLGHREPSAHPVEVFSFDLHEPLSKERVEAFSDGVYAIVATLLILDICEDNVPDPKDVKERFSGSLVAALSATGPRFLAYFGSFATVGLLWFAHHSLFLHVRKATRAMGLLNTLSLAFVGGLPLAYQQTSAFARQPRDELERVRVSCTIIFLASIFQLAMWTTALLHQAETLQPSVWFGGREHVLMFAKLALYPCASLLAFASTCLLSRFSVGIFHLMQIAVPCAFLLLRLLVGLALATLRVLRGLARPEHPPPAPTGQDDPQSQLLPAPC</sequence>
<comment type="function">
    <text evidence="4 6 9 10 11 12 14 15">Proton-activated proton channel that catalyzes proton efflux from endosomes and lysosomes to maintain a steady-state pH (PubMed:35333573, PubMed:35750034, PubMed:37390818). Activated at low pH (under pH 4.6) by luminal side protons: selectively mediates lysosomal proton release from lysosomes, eliciting a proton leak that balances V-ATPase activity to maintain pH homeostasis (PubMed:35750034). Regulation of lumenal pH stability is required for autophagosome-lysosome fusion (PubMed:26317472, PubMed:32267231). Also acts as a potassium channel at higher pH, regulating potassium conductance in endosomes and lysosomes (PubMed:26317472, PubMed:28723891, PubMed:32228865, PubMed:32267231, PubMed:33505021). Constitutes the pore-forming subunit of the lysoK(GF) complex, a complex activated by extracellular growth factors (PubMed:33505021). The lysoK(GF) complex is composed of TMEM175 and AKT (AKT1, AKT2 or AKT3), a major target of growth factor receptors: in the complex, TMEM175 channel is opened by conformational changes by AKT, leading to its activation (PubMed:33505021). The lysoK(GF) complex is required to protect neurons against stress-induced damage (PubMed:33505021).</text>
</comment>
<comment type="catalytic activity">
    <reaction evidence="14 15">
        <text>H(+)(in) = H(+)(out)</text>
        <dbReference type="Rhea" id="RHEA:34979"/>
        <dbReference type="ChEBI" id="CHEBI:15378"/>
    </reaction>
</comment>
<comment type="catalytic activity">
    <reaction evidence="4 6 9 10 11">
        <text>K(+)(in) = K(+)(out)</text>
        <dbReference type="Rhea" id="RHEA:29463"/>
        <dbReference type="ChEBI" id="CHEBI:29103"/>
    </reaction>
</comment>
<comment type="activity regulation">
    <text evidence="11 14 15">Active at low pH (under pH 4.6): proton channel activity is activated by luminal side protons (PubMed:35750034). Polyunsaturated fatty acids, such as arachidonic acid, also activate the channel activity (PubMed:35750034). Proton channel activity is directly inhibited by LAMP1 or LAMP2, facilitating lysosomal acidification (PubMed:37390818). Channel activity is activated following interaction with AKT (AKT1, AKT2 or AKT3): interaction promotes activation from closed to an open state (PubMed:33505021). Activation by AKT is independent of AKT serine/threonine-protein kinase activity (PubMed:33505021).</text>
</comment>
<comment type="subunit">
    <text evidence="9 11 13 15 22">Homodimer (PubMed:28723891, PubMed:32228865, PubMed:35608336). Interacts with AKT (AKT1, AKT2 or AKT3); leading to formation of the lysoK(GF) complex, which activates the channel (PubMed:33505021). Interacts with LAMP1; inhibiting the proton channel activity of TMEM175 (PubMed:37390818). Interacts with LAMP2; inhibiting the proton channel activity of TMEM175 (PubMed:37390818).</text>
</comment>
<comment type="subcellular location">
    <subcellularLocation>
        <location evidence="4 9">Endosome membrane</location>
        <topology evidence="9">Multi-pass membrane protein</topology>
    </subcellularLocation>
    <subcellularLocation>
        <location evidence="4 7 8 9">Lysosome membrane</location>
        <topology evidence="9">Multi-pass membrane protein</topology>
    </subcellularLocation>
</comment>
<comment type="alternative products">
    <event type="alternative splicing"/>
    <isoform>
        <id>Q9BSA9-1</id>
        <name>1</name>
        <sequence type="displayed"/>
    </isoform>
    <isoform>
        <id>Q9BSA9-2</id>
        <name>2</name>
        <sequence type="described" ref="VSP_024213"/>
    </isoform>
</comment>
<comment type="tissue specificity">
    <text evidence="4">Widely expressed.</text>
</comment>
<comment type="domain">
    <text evidence="6 9">Composed of two modules of six transmembranes, forming a homodimer with a tetrameric architecture (PubMed:28723891, PubMed:32228865). The six transmembrane regions of each module are tightly packed within each subunit without undergoing domain swapping (PubMed:32228865). Forms a central ion-conduction pore lined by the side chains of the pore-lining helices (PubMed:32228865). Conserved isoleucine residues (Ile-46 in the first module and Ile-271 in the second module) in the center of the pore serve as the gate in the closed conformation (PubMed:32228865). In the widened channel in the open conformation, Ser-45 and Ile-46 in the first module (and Thr-274 and Ile-271 in the second module), establish a constriction essential for potassium selectivity (PubMed:32228865).</text>
</comment>
<comment type="disease" evidence="5 7 8 11">
    <disease id="DI-02134">
        <name>Parkinson disease</name>
        <acronym>PARK</acronym>
        <description>A complex neurodegenerative disorder characterized by bradykinesia, resting tremor, muscular rigidity and postural instability. Additional features are characteristic postural abnormalities, dysautonomia, dystonic cramps, and dementia. The pathology of Parkinson disease involves the loss of dopaminergic neurons in the substantia nigra and the presence of Lewy bodies (intraneuronal accumulations of aggregated proteins), in surviving neurons in various areas of the brain. The disease is progressive and usually manifests after the age of 50 years, although early-onset cases (before 50 years) are known. The majority of the cases are sporadic suggesting a multifactorial etiology based on environmental and genetic factors. However, some patients present with a positive family history for the disease. Familial forms of the disease usually begin at earlier ages and are associated with atypical clinical features.</description>
        <dbReference type="MIM" id="168600"/>
    </disease>
    <text evidence="5">Disease susceptibility may be associated with variants affecting the gene represented in this entry. TMEM175 defects result in unstable lysosomal pH, leading to decreased lysosomal catalytic activity, decreased glucocerebrosidase activity, impaired autophagosome clearance by the lysosome and decreased mitochondrial respiration (PubMed:28193887).</text>
</comment>
<comment type="similarity">
    <text evidence="20">Belongs to the TMEM175 family.</text>
</comment>
<comment type="caution">
    <text evidence="4 14">A publication claims that potassium transport was initially measured with a luminal side pH above 7.0, which is non-physiological for lysosomal channels (PubMed:35750034). This statement is however incorrect as potassium transport was tested at lumenal pH of 5.5, which is considered physiological (PubMed:26317472).</text>
</comment>
<organism>
    <name type="scientific">Homo sapiens</name>
    <name type="common">Human</name>
    <dbReference type="NCBI Taxonomy" id="9606"/>
    <lineage>
        <taxon>Eukaryota</taxon>
        <taxon>Metazoa</taxon>
        <taxon>Chordata</taxon>
        <taxon>Craniata</taxon>
        <taxon>Vertebrata</taxon>
        <taxon>Euteleostomi</taxon>
        <taxon>Mammalia</taxon>
        <taxon>Eutheria</taxon>
        <taxon>Euarchontoglires</taxon>
        <taxon>Primates</taxon>
        <taxon>Haplorrhini</taxon>
        <taxon>Catarrhini</taxon>
        <taxon>Hominidae</taxon>
        <taxon>Homo</taxon>
    </lineage>
</organism>
<dbReference type="EMBL" id="AL834199">
    <property type="protein sequence ID" value="CAD38888.1"/>
    <property type="molecule type" value="mRNA"/>
</dbReference>
<dbReference type="EMBL" id="CH471131">
    <property type="protein sequence ID" value="EAW82633.1"/>
    <property type="molecule type" value="Genomic_DNA"/>
</dbReference>
<dbReference type="EMBL" id="CH471131">
    <property type="protein sequence ID" value="EAW82638.1"/>
    <property type="molecule type" value="Genomic_DNA"/>
</dbReference>
<dbReference type="EMBL" id="BC005158">
    <property type="protein sequence ID" value="AAH05158.1"/>
    <property type="molecule type" value="mRNA"/>
</dbReference>
<dbReference type="CCDS" id="CCDS3341.1">
    <molecule id="Q9BSA9-1"/>
</dbReference>
<dbReference type="CCDS" id="CCDS75088.1">
    <molecule id="Q9BSA9-2"/>
</dbReference>
<dbReference type="RefSeq" id="NP_001284355.1">
    <molecule id="Q9BSA9-2"/>
    <property type="nucleotide sequence ID" value="NM_001297426.2"/>
</dbReference>
<dbReference type="RefSeq" id="NP_001284356.1">
    <molecule id="Q9BSA9-2"/>
    <property type="nucleotide sequence ID" value="NM_001297427.2"/>
</dbReference>
<dbReference type="RefSeq" id="NP_001284357.1">
    <molecule id="Q9BSA9-2"/>
    <property type="nucleotide sequence ID" value="NM_001297428.2"/>
</dbReference>
<dbReference type="RefSeq" id="NP_115702.1">
    <molecule id="Q9BSA9-1"/>
    <property type="nucleotide sequence ID" value="NM_032326.4"/>
</dbReference>
<dbReference type="RefSeq" id="XP_005272361.1">
    <property type="nucleotide sequence ID" value="XM_005272304.1"/>
</dbReference>
<dbReference type="RefSeq" id="XP_016864190.1">
    <molecule id="Q9BSA9-1"/>
    <property type="nucleotide sequence ID" value="XM_017008701.2"/>
</dbReference>
<dbReference type="RefSeq" id="XP_016864194.1">
    <property type="nucleotide sequence ID" value="XM_017008705.1"/>
</dbReference>
<dbReference type="RefSeq" id="XP_054207016.1">
    <molecule id="Q9BSA9-1"/>
    <property type="nucleotide sequence ID" value="XM_054351041.1"/>
</dbReference>
<dbReference type="PDB" id="6W8N">
    <property type="method" value="EM"/>
    <property type="resolution" value="3.20 A"/>
    <property type="chains" value="A/B=1-504"/>
</dbReference>
<dbReference type="PDB" id="6W8O">
    <property type="method" value="EM"/>
    <property type="resolution" value="3.40 A"/>
    <property type="chains" value="A/B=1-504"/>
</dbReference>
<dbReference type="PDB" id="6W8P">
    <property type="method" value="EM"/>
    <property type="resolution" value="3.60 A"/>
    <property type="chains" value="A/B=1-504"/>
</dbReference>
<dbReference type="PDB" id="6WC9">
    <property type="method" value="EM"/>
    <property type="resolution" value="2.64 A"/>
    <property type="chains" value="A/B=1-504"/>
</dbReference>
<dbReference type="PDB" id="6WCA">
    <property type="method" value="EM"/>
    <property type="resolution" value="3.03 A"/>
    <property type="chains" value="A/B=1-504"/>
</dbReference>
<dbReference type="PDB" id="6WCB">
    <property type="method" value="EM"/>
    <property type="resolution" value="3.17 A"/>
    <property type="chains" value="A/B=1-504"/>
</dbReference>
<dbReference type="PDB" id="6WCC">
    <property type="method" value="EM"/>
    <property type="resolution" value="3.24 A"/>
    <property type="chains" value="A/B=1-504"/>
</dbReference>
<dbReference type="PDB" id="7LF6">
    <property type="method" value="EM"/>
    <property type="resolution" value="3.50 A"/>
    <property type="chains" value="A/B=1-504"/>
</dbReference>
<dbReference type="PDB" id="7UNL">
    <property type="method" value="EM"/>
    <property type="resolution" value="2.45 A"/>
    <property type="chains" value="A/B=1-504"/>
</dbReference>
<dbReference type="PDB" id="7UNM">
    <property type="method" value="EM"/>
    <property type="resolution" value="2.61 A"/>
    <property type="chains" value="A/B=1-504"/>
</dbReference>
<dbReference type="PDB" id="8DHM">
    <property type="method" value="EM"/>
    <property type="resolution" value="2.73 A"/>
    <property type="chains" value="A/B=1-504"/>
</dbReference>
<dbReference type="PDB" id="8FY5">
    <property type="method" value="EM"/>
    <property type="resolution" value="3.40 A"/>
    <property type="chains" value="A/B=1-504"/>
</dbReference>
<dbReference type="PDB" id="8FYF">
    <property type="method" value="EM"/>
    <property type="resolution" value="3.40 A"/>
    <property type="chains" value="A/B=1-504"/>
</dbReference>
<dbReference type="PDB" id="8VIC">
    <property type="method" value="EM"/>
    <property type="resolution" value="3.48 A"/>
    <property type="chains" value="A/B=1-504"/>
</dbReference>
<dbReference type="PDB" id="8VIE">
    <property type="method" value="EM"/>
    <property type="resolution" value="3.52 A"/>
    <property type="chains" value="A/B=1-504"/>
</dbReference>
<dbReference type="PDBsum" id="6W8N"/>
<dbReference type="PDBsum" id="6W8O"/>
<dbReference type="PDBsum" id="6W8P"/>
<dbReference type="PDBsum" id="6WC9"/>
<dbReference type="PDBsum" id="6WCA"/>
<dbReference type="PDBsum" id="6WCB"/>
<dbReference type="PDBsum" id="6WCC"/>
<dbReference type="PDBsum" id="7LF6"/>
<dbReference type="PDBsum" id="7UNL"/>
<dbReference type="PDBsum" id="7UNM"/>
<dbReference type="PDBsum" id="8DHM"/>
<dbReference type="PDBsum" id="8FY5"/>
<dbReference type="PDBsum" id="8FYF"/>
<dbReference type="PDBsum" id="8VIC"/>
<dbReference type="PDBsum" id="8VIE"/>
<dbReference type="EMDB" id="EMD-21575"/>
<dbReference type="EMDB" id="EMD-21576"/>
<dbReference type="EMDB" id="EMD-21577"/>
<dbReference type="EMDB" id="EMD-21603"/>
<dbReference type="EMDB" id="EMD-21604"/>
<dbReference type="EMDB" id="EMD-21605"/>
<dbReference type="EMDB" id="EMD-21606"/>
<dbReference type="EMDB" id="EMD-23300"/>
<dbReference type="EMDB" id="EMD-26626"/>
<dbReference type="EMDB" id="EMD-26627"/>
<dbReference type="EMDB" id="EMD-27436"/>
<dbReference type="EMDB" id="EMD-29553"/>
<dbReference type="EMDB" id="EMD-29572"/>
<dbReference type="EMDB" id="EMD-43257"/>
<dbReference type="EMDB" id="EMD-43259"/>
<dbReference type="SMR" id="Q9BSA9"/>
<dbReference type="BioGRID" id="124013">
    <property type="interactions" value="8"/>
</dbReference>
<dbReference type="FunCoup" id="Q9BSA9">
    <property type="interactions" value="1264"/>
</dbReference>
<dbReference type="IntAct" id="Q9BSA9">
    <property type="interactions" value="9"/>
</dbReference>
<dbReference type="MINT" id="Q9BSA9"/>
<dbReference type="STRING" id="9606.ENSP00000264771"/>
<dbReference type="TCDB" id="1.A.78.1.1">
    <property type="family name" value="the k+-selective channel in endosomes and lysosomes (kel) family"/>
</dbReference>
<dbReference type="iPTMnet" id="Q9BSA9"/>
<dbReference type="PhosphoSitePlus" id="Q9BSA9"/>
<dbReference type="SwissPalm" id="Q9BSA9"/>
<dbReference type="BioMuta" id="TMEM175"/>
<dbReference type="DMDM" id="74732981"/>
<dbReference type="jPOST" id="Q9BSA9"/>
<dbReference type="MassIVE" id="Q9BSA9"/>
<dbReference type="PaxDb" id="9606-ENSP00000264771"/>
<dbReference type="PeptideAtlas" id="Q9BSA9"/>
<dbReference type="ProteomicsDB" id="78871">
    <molecule id="Q9BSA9-1"/>
</dbReference>
<dbReference type="ProteomicsDB" id="78872">
    <molecule id="Q9BSA9-2"/>
</dbReference>
<dbReference type="Antibodypedia" id="8167">
    <property type="antibodies" value="61 antibodies from 20 providers"/>
</dbReference>
<dbReference type="DNASU" id="84286"/>
<dbReference type="Ensembl" id="ENST00000264771.9">
    <molecule id="Q9BSA9-1"/>
    <property type="protein sequence ID" value="ENSP00000264771.4"/>
    <property type="gene ID" value="ENSG00000127419.17"/>
</dbReference>
<dbReference type="Ensembl" id="ENST00000515740.5">
    <molecule id="Q9BSA9-2"/>
    <property type="protein sequence ID" value="ENSP00000427039.1"/>
    <property type="gene ID" value="ENSG00000127419.17"/>
</dbReference>
<dbReference type="Ensembl" id="ENST00000622959.3">
    <molecule id="Q9BSA9-2"/>
    <property type="protein sequence ID" value="ENSP00000485461.1"/>
    <property type="gene ID" value="ENSG00000127419.17"/>
</dbReference>
<dbReference type="GeneID" id="84286"/>
<dbReference type="KEGG" id="hsa:84286"/>
<dbReference type="MANE-Select" id="ENST00000264771.9">
    <property type="protein sequence ID" value="ENSP00000264771.4"/>
    <property type="RefSeq nucleotide sequence ID" value="NM_032326.4"/>
    <property type="RefSeq protein sequence ID" value="NP_115702.1"/>
</dbReference>
<dbReference type="UCSC" id="uc003gbq.4">
    <molecule id="Q9BSA9-1"/>
    <property type="organism name" value="human"/>
</dbReference>
<dbReference type="AGR" id="HGNC:28709"/>
<dbReference type="CTD" id="84286"/>
<dbReference type="DisGeNET" id="84286"/>
<dbReference type="GeneCards" id="TMEM175"/>
<dbReference type="HGNC" id="HGNC:28709">
    <property type="gene designation" value="TMEM175"/>
</dbReference>
<dbReference type="HPA" id="ENSG00000127419">
    <property type="expression patterns" value="Low tissue specificity"/>
</dbReference>
<dbReference type="MIM" id="168600">
    <property type="type" value="phenotype"/>
</dbReference>
<dbReference type="MIM" id="616660">
    <property type="type" value="gene"/>
</dbReference>
<dbReference type="neXtProt" id="NX_Q9BSA9"/>
<dbReference type="OpenTargets" id="ENSG00000127419"/>
<dbReference type="PharmGKB" id="PA162405946"/>
<dbReference type="VEuPathDB" id="HostDB:ENSG00000127419"/>
<dbReference type="eggNOG" id="ENOG502QR5C">
    <property type="taxonomic scope" value="Eukaryota"/>
</dbReference>
<dbReference type="GeneTree" id="ENSGT00390000015667"/>
<dbReference type="InParanoid" id="Q9BSA9"/>
<dbReference type="OMA" id="FFFPVSY"/>
<dbReference type="OrthoDB" id="203835at2759"/>
<dbReference type="PAN-GO" id="Q9BSA9">
    <property type="GO annotations" value="3 GO annotations based on evolutionary models"/>
</dbReference>
<dbReference type="PhylomeDB" id="Q9BSA9"/>
<dbReference type="TreeFam" id="TF328838"/>
<dbReference type="PathwayCommons" id="Q9BSA9"/>
<dbReference type="SignaLink" id="Q9BSA9"/>
<dbReference type="BioGRID-ORCS" id="84286">
    <property type="hits" value="16 hits in 1152 CRISPR screens"/>
</dbReference>
<dbReference type="ChiTaRS" id="TMEM175">
    <property type="organism name" value="human"/>
</dbReference>
<dbReference type="GenomeRNAi" id="84286"/>
<dbReference type="Pharos" id="Q9BSA9">
    <property type="development level" value="Tbio"/>
</dbReference>
<dbReference type="PRO" id="PR:Q9BSA9"/>
<dbReference type="Proteomes" id="UP000005640">
    <property type="component" value="Chromosome 4"/>
</dbReference>
<dbReference type="RNAct" id="Q9BSA9">
    <property type="molecule type" value="protein"/>
</dbReference>
<dbReference type="Bgee" id="ENSG00000127419">
    <property type="expression patterns" value="Expressed in right hemisphere of cerebellum and 157 other cell types or tissues"/>
</dbReference>
<dbReference type="ExpressionAtlas" id="Q9BSA9">
    <property type="expression patterns" value="baseline and differential"/>
</dbReference>
<dbReference type="GO" id="GO:0005768">
    <property type="term" value="C:endosome"/>
    <property type="evidence" value="ECO:0000314"/>
    <property type="project" value="UniProtKB"/>
</dbReference>
<dbReference type="GO" id="GO:0010008">
    <property type="term" value="C:endosome membrane"/>
    <property type="evidence" value="ECO:0000314"/>
    <property type="project" value="UniProtKB"/>
</dbReference>
<dbReference type="GO" id="GO:0005765">
    <property type="term" value="C:lysosomal membrane"/>
    <property type="evidence" value="ECO:0000314"/>
    <property type="project" value="UniProtKB"/>
</dbReference>
<dbReference type="GO" id="GO:0005764">
    <property type="term" value="C:lysosome"/>
    <property type="evidence" value="ECO:0000314"/>
    <property type="project" value="UniProtKB"/>
</dbReference>
<dbReference type="GO" id="GO:0050544">
    <property type="term" value="F:arachidonate binding"/>
    <property type="evidence" value="ECO:0000314"/>
    <property type="project" value="UniProtKB"/>
</dbReference>
<dbReference type="GO" id="GO:0005267">
    <property type="term" value="F:potassium channel activity"/>
    <property type="evidence" value="ECO:0000314"/>
    <property type="project" value="UniProtKB"/>
</dbReference>
<dbReference type="GO" id="GO:0022841">
    <property type="term" value="F:potassium ion leak channel activity"/>
    <property type="evidence" value="ECO:0000314"/>
    <property type="project" value="UniProtKB"/>
</dbReference>
<dbReference type="GO" id="GO:0015252">
    <property type="term" value="F:proton channel activity"/>
    <property type="evidence" value="ECO:0000314"/>
    <property type="project" value="UniProtKB"/>
</dbReference>
<dbReference type="GO" id="GO:0035752">
    <property type="term" value="P:lysosomal lumen pH elevation"/>
    <property type="evidence" value="ECO:0000314"/>
    <property type="project" value="UniProtKB"/>
</dbReference>
<dbReference type="GO" id="GO:0070050">
    <property type="term" value="P:neuron cellular homeostasis"/>
    <property type="evidence" value="ECO:0000250"/>
    <property type="project" value="UniProtKB"/>
</dbReference>
<dbReference type="GO" id="GO:0090385">
    <property type="term" value="P:phagosome-lysosome fusion"/>
    <property type="evidence" value="ECO:0007669"/>
    <property type="project" value="Ensembl"/>
</dbReference>
<dbReference type="GO" id="GO:0071805">
    <property type="term" value="P:potassium ion transmembrane transport"/>
    <property type="evidence" value="ECO:0000314"/>
    <property type="project" value="UniProtKB"/>
</dbReference>
<dbReference type="GO" id="GO:1902600">
    <property type="term" value="P:proton transmembrane transport"/>
    <property type="evidence" value="ECO:0000314"/>
    <property type="project" value="UniProtKB"/>
</dbReference>
<dbReference type="GO" id="GO:0035751">
    <property type="term" value="P:regulation of lysosomal lumen pH"/>
    <property type="evidence" value="ECO:0000314"/>
    <property type="project" value="UniProt"/>
</dbReference>
<dbReference type="InterPro" id="IPR010617">
    <property type="entry name" value="TMEM175-like"/>
</dbReference>
<dbReference type="PANTHER" id="PTHR31462">
    <property type="entry name" value="ENDOSOMAL/LYSOSOMAL POTASSIUM CHANNEL TMEM175"/>
    <property type="match status" value="1"/>
</dbReference>
<dbReference type="PANTHER" id="PTHR31462:SF5">
    <property type="entry name" value="ENDOSOMAL_LYSOSOMAL PROTON CHANNEL TMEM175"/>
    <property type="match status" value="1"/>
</dbReference>
<dbReference type="Pfam" id="PF06736">
    <property type="entry name" value="TMEM175"/>
    <property type="match status" value="2"/>
</dbReference>
<name>TM175_HUMAN</name>
<reference key="1">
    <citation type="journal article" date="2007" name="BMC Genomics">
        <title>The full-ORF clone resource of the German cDNA consortium.</title>
        <authorList>
            <person name="Bechtel S."/>
            <person name="Rosenfelder H."/>
            <person name="Duda A."/>
            <person name="Schmidt C.P."/>
            <person name="Ernst U."/>
            <person name="Wellenreuther R."/>
            <person name="Mehrle A."/>
            <person name="Schuster C."/>
            <person name="Bahr A."/>
            <person name="Bloecker H."/>
            <person name="Heubner D."/>
            <person name="Hoerlein A."/>
            <person name="Michel G."/>
            <person name="Wedler H."/>
            <person name="Koehrer K."/>
            <person name="Ottenwaelder B."/>
            <person name="Poustka A."/>
            <person name="Wiemann S."/>
            <person name="Schupp I."/>
        </authorList>
    </citation>
    <scope>NUCLEOTIDE SEQUENCE [LARGE SCALE MRNA] (ISOFORM 2)</scope>
    <source>
        <tissue>Brain</tissue>
    </source>
</reference>
<reference key="2">
    <citation type="submission" date="2005-09" db="EMBL/GenBank/DDBJ databases">
        <authorList>
            <person name="Mural R.J."/>
            <person name="Istrail S."/>
            <person name="Sutton G.G."/>
            <person name="Florea L."/>
            <person name="Halpern A.L."/>
            <person name="Mobarry C.M."/>
            <person name="Lippert R."/>
            <person name="Walenz B."/>
            <person name="Shatkay H."/>
            <person name="Dew I."/>
            <person name="Miller J.R."/>
            <person name="Flanigan M.J."/>
            <person name="Edwards N.J."/>
            <person name="Bolanos R."/>
            <person name="Fasulo D."/>
            <person name="Halldorsson B.V."/>
            <person name="Hannenhalli S."/>
            <person name="Turner R."/>
            <person name="Yooseph S."/>
            <person name="Lu F."/>
            <person name="Nusskern D.R."/>
            <person name="Shue B.C."/>
            <person name="Zheng X.H."/>
            <person name="Zhong F."/>
            <person name="Delcher A.L."/>
            <person name="Huson D.H."/>
            <person name="Kravitz S.A."/>
            <person name="Mouchard L."/>
            <person name="Reinert K."/>
            <person name="Remington K.A."/>
            <person name="Clark A.G."/>
            <person name="Waterman M.S."/>
            <person name="Eichler E.E."/>
            <person name="Adams M.D."/>
            <person name="Hunkapiller M.W."/>
            <person name="Myers E.W."/>
            <person name="Venter J.C."/>
        </authorList>
    </citation>
    <scope>NUCLEOTIDE SEQUENCE [LARGE SCALE GENOMIC DNA]</scope>
</reference>
<reference key="3">
    <citation type="journal article" date="2004" name="Genome Res.">
        <title>The status, quality, and expansion of the NIH full-length cDNA project: the Mammalian Gene Collection (MGC).</title>
        <authorList>
            <consortium name="The MGC Project Team"/>
        </authorList>
    </citation>
    <scope>NUCLEOTIDE SEQUENCE [LARGE SCALE MRNA] (ISOFORM 1)</scope>
    <source>
        <tissue>Kidney</tissue>
    </source>
</reference>
<reference key="4">
    <citation type="journal article" date="2008" name="Mol. Cell">
        <title>Kinase-selective enrichment enables quantitative phosphoproteomics of the kinome across the cell cycle.</title>
        <authorList>
            <person name="Daub H."/>
            <person name="Olsen J.V."/>
            <person name="Bairlein M."/>
            <person name="Gnad F."/>
            <person name="Oppermann F.S."/>
            <person name="Korner R."/>
            <person name="Greff Z."/>
            <person name="Keri G."/>
            <person name="Stemmann O."/>
            <person name="Mann M."/>
        </authorList>
    </citation>
    <scope>PHOSPHORYLATION [LARGE SCALE ANALYSIS] AT THR-6</scope>
    <scope>IDENTIFICATION BY MASS SPECTROMETRY [LARGE SCALE ANALYSIS]</scope>
    <source>
        <tissue>Cervix carcinoma</tissue>
    </source>
</reference>
<reference key="5">
    <citation type="journal article" date="2015" name="Cell">
        <title>TMEM175 is an organelle K(+) channel regulating lysosomal function.</title>
        <authorList>
            <person name="Cang C."/>
            <person name="Aranda K."/>
            <person name="Seo Y.J."/>
            <person name="Gasnier B."/>
            <person name="Ren D."/>
        </authorList>
    </citation>
    <scope>FUNCTION</scope>
    <scope>TRANSPORTER ACTIVITY</scope>
    <scope>DOMAIN</scope>
    <scope>SUBCELLULAR LOCATION</scope>
    <scope>TOPOLOGY</scope>
    <scope>TISSUE SPECIFICITY</scope>
    <scope>MUTAGENESIS OF ARG-35; PHE-39; SER-40 AND ASP-41</scope>
</reference>
<reference key="6">
    <citation type="journal article" date="2017" name="Nature">
        <title>The lysosomal potassium channel TMEM175 adopts a novel tetrameric architecture.</title>
        <authorList>
            <person name="Lee C."/>
            <person name="Guo J."/>
            <person name="Zeng W."/>
            <person name="Kim S."/>
            <person name="She J."/>
            <person name="Cang C."/>
            <person name="Ren D."/>
            <person name="Jiang Y."/>
        </authorList>
    </citation>
    <scope>FUNCTION</scope>
    <scope>TRANSPORTER ACTIVITY</scope>
    <scope>SUBUNIT</scope>
    <scope>DOMAIN</scope>
    <scope>MUTAGENESIS OF ILE-46; VAL-50; LEU-53; ILE-271; LEU-275 AND LEU-278</scope>
</reference>
<reference key="7">
    <citation type="journal article" date="2017" name="Proc. Natl. Acad. Sci. U.S.A.">
        <title>TMEM175 deficiency impairs lysosomal and mitochondrial function and increases alpha-synuclein aggregation.</title>
        <authorList>
            <person name="Jinn S."/>
            <person name="Drolet R.E."/>
            <person name="Cramer P.E."/>
            <person name="Wong A.H."/>
            <person name="Toolan D.M."/>
            <person name="Gretzula C.A."/>
            <person name="Voleti B."/>
            <person name="Vassileva G."/>
            <person name="Disa J."/>
            <person name="Tadin-Strapps M."/>
            <person name="Stone D.J."/>
        </authorList>
    </citation>
    <scope>POSSIBLE INVOLVEMENT IN PARK</scope>
</reference>
<reference key="8">
    <citation type="journal article" date="2020" name="Ann. Neurol.">
        <title>Genetic, structural, and functional evidence link TMEM175 to synucleinopathies.</title>
        <authorList>
            <person name="Krohn L."/>
            <person name="Oeztuerk T.N."/>
            <person name="Vanderperre B."/>
            <person name="Ouled Amar Bencheikh B."/>
            <person name="Ruskey J.A."/>
            <person name="Laurent S.B."/>
            <person name="Spiegelman D."/>
            <person name="Postuma R.B."/>
            <person name="Arnulf I."/>
            <person name="Hu M.T.M."/>
            <person name="Dauvilliers Y."/>
            <person name="Hoegl B."/>
            <person name="Stefani A."/>
            <person name="Monaca C.C."/>
            <person name="Plazzi G."/>
            <person name="Antelmi E."/>
            <person name="Ferini-Strambi L."/>
            <person name="Heidbreder A."/>
            <person name="Rudakou U."/>
            <person name="Cochen De Cock V."/>
            <person name="Young P."/>
            <person name="Wolf P."/>
            <person name="Oliva P."/>
            <person name="Zhang X.K."/>
            <person name="Greenbaum L."/>
            <person name="Liong C."/>
            <person name="Gagnon J.F."/>
            <person name="Desautels A."/>
            <person name="Hassin-Baer S."/>
            <person name="Montplaisir J.Y."/>
            <person name="Dupre N."/>
            <person name="Rouleau G.A."/>
            <person name="Fon E.A."/>
            <person name="Trempe J.F."/>
            <person name="Lamoureux G."/>
            <person name="Alcalay R.N."/>
            <person name="Gan-Or Z."/>
        </authorList>
    </citation>
    <scope>SUBCELLULAR LOCATION</scope>
    <scope>INVOLVEMENT IN PARK</scope>
    <scope>VARIANTS PRO-65 AND THR-393</scope>
    <scope>CHARACTERIZATION OF VARIANTS PRO-65 AND THR-393</scope>
</reference>
<reference key="9">
    <citation type="journal article" date="2019" name="Hum. Mol. Genet.">
        <title>Functionalization of the TMEM175 p.M393T variant as a risk factor for Parkinson disease.</title>
        <authorList>
            <person name="Jinn S."/>
            <person name="Blauwendraat C."/>
            <person name="Toolan D."/>
            <person name="Gretzula C.A."/>
            <person name="Drolet R.E."/>
            <person name="Smith S."/>
            <person name="Nalls M.A."/>
            <person name="Marcus J."/>
            <person name="Singleton A.B."/>
            <person name="Stone D.J."/>
        </authorList>
    </citation>
    <scope>SUBCELLULAR LOCATION</scope>
    <scope>INVOLVEMENT IN PARK</scope>
    <scope>VARIANT THR-393</scope>
    <scope>CHARACTERIZATION OF VARIANT THR-393</scope>
</reference>
<reference key="10">
    <citation type="journal article" date="2020" name="Elife">
        <title>Structural basis for ion selectivity in TMEM175 K+ channels.</title>
        <authorList>
            <person name="Brunner J.D."/>
            <person name="Jakob R.P."/>
            <person name="Schulze T."/>
            <person name="Neldner Y."/>
            <person name="Moroni A."/>
            <person name="Thiel G."/>
            <person name="Maier T."/>
            <person name="Schenck S."/>
        </authorList>
    </citation>
    <scope>FUNCTION</scope>
    <scope>TRANSPORTER ACTIVITY</scope>
    <scope>MUTAGENESIS OF 45-SER--THR-49; THR-49 AND THR-274</scope>
</reference>
<reference key="11">
    <citation type="journal article" date="2021" name="Nature">
        <title>A growth-factor-activated lysosomal K+ channel regulates Parkinson's pathology.</title>
        <authorList>
            <person name="Wie J."/>
            <person name="Liu Z."/>
            <person name="Song H."/>
            <person name="Tropea T.F."/>
            <person name="Yang L."/>
            <person name="Wang H."/>
            <person name="Liang Y."/>
            <person name="Cang C."/>
            <person name="Aranda K."/>
            <person name="Lohmann J."/>
            <person name="Yang J."/>
            <person name="Lu B."/>
            <person name="Chen-Plotkin A.S."/>
            <person name="Luk K.C."/>
            <person name="Ren D."/>
        </authorList>
    </citation>
    <scope>FUNCTION</scope>
    <scope>TRANSPORTER ACTIVITY</scope>
    <scope>ACTIVITY REGULATION</scope>
    <scope>INTERACTION WITH AKT1</scope>
    <scope>IDENTIFICATION IN THE LYSOK(GF) COMPLEX</scope>
    <scope>INVOLVEMENT IN PARK</scope>
    <scope>CHARACTERIZATION OF VARIANTS PRO-65 AND THR-393</scope>
    <scope>MUTAGENESIS OF SER-241; THR-338 AND MET-393</scope>
</reference>
<reference key="12">
    <citation type="journal article" date="2022" name="Cell">
        <title>Parkinson's disease-risk protein TMEM175 is a proton-activated proton channel in lysosomes.</title>
        <authorList>
            <person name="Hu M."/>
            <person name="Li P."/>
            <person name="Wang C."/>
            <person name="Feng X."/>
            <person name="Geng Q."/>
            <person name="Chen W."/>
            <person name="Marthi M."/>
            <person name="Zhang W."/>
            <person name="Gao C."/>
            <person name="Reid W."/>
            <person name="Swanson J."/>
            <person name="Du W."/>
            <person name="Hume R.I."/>
            <person name="Xu H."/>
        </authorList>
    </citation>
    <scope>FUNCTION</scope>
    <scope>TRANSPORTER ACTIVITY</scope>
    <scope>ACTIVITY REGULATION</scope>
    <scope>MUTAGENESIS OF ASP-41 AND SER-45</scope>
</reference>
<reference key="13">
    <citation type="journal article" date="2022" name="Sci. Adv.">
        <title>pH regulates potassium conductance and drives a constitutive proton current in human TMEM175.</title>
        <authorList>
            <person name="Zheng W."/>
            <person name="Shen C."/>
            <person name="Wang L."/>
            <person name="Rawson S."/>
            <person name="Xie W.J."/>
            <person name="Nist-Lund C."/>
            <person name="Wu J."/>
            <person name="Shen Z."/>
            <person name="Xia S."/>
            <person name="Holt J.R."/>
            <person name="Wu H."/>
            <person name="Fu T.M."/>
        </authorList>
    </citation>
    <scope>FUNCTION</scope>
    <scope>TRANSPORTER ACTIVITY</scope>
    <scope>MUTAGENESIS OF SER-38; SER-45; ILE-46; THR-49; ILE-271; THR-274; ASP-279; ASP-283; ARG-309; HIS-327; HIS-328; ASN-345; GLN-360 AND HIS-449</scope>
</reference>
<reference evidence="25 26 27 28" key="14">
    <citation type="journal article" date="2020" name="Elife">
        <title>Gating and selectivity mechanisms for the lysosomal K+ channel TMEM175.</title>
        <authorList>
            <person name="Oh S."/>
            <person name="Paknejad N."/>
            <person name="Hite R.K."/>
        </authorList>
    </citation>
    <scope>STRUCTURE BY ELECTRON MICROSCOPY (2.64 ANGSTROMS)</scope>
    <scope>FUNCTION</scope>
    <scope>TRANSPORTER ACTIVITY</scope>
    <scope>SUBCELLULAR LOCATION</scope>
    <scope>SUBUNIT</scope>
    <scope>DOMAIN</scope>
    <scope>MUTAGENESIS OF SER-45 AND THR-274</scope>
</reference>
<reference key="15">
    <citation type="journal article" date="2022" name="Elife">
        <title>Differential ion dehydration energetics explains selectivity in the non-canonical lysosomal K+ channel TMEM175.</title>
        <authorList>
            <person name="Oh S."/>
            <person name="Marinelli F."/>
            <person name="Zhou W."/>
            <person name="Lee J."/>
            <person name="Choi H.J."/>
            <person name="Kim M."/>
            <person name="Faraldo-Gomez J.D."/>
            <person name="Hite R.K."/>
        </authorList>
    </citation>
    <scope>STRUCTURE BY ELECTRON MICROSCOPY (2.45 ANGSTROMS)</scope>
    <scope>FUNCTION</scope>
    <scope>SUBUNIT</scope>
    <scope>MUTAGENESIS OF ILE-46 AND ILE-271</scope>
</reference>
<reference evidence="29" key="16">
    <citation type="journal article" date="2023" name="Mol. Cell">
        <title>Lysosomal LAMP proteins regulate lysosomal pH by direct inhibition of the TMEM175 channel.</title>
        <authorList>
            <person name="Zhang J."/>
            <person name="Zeng W."/>
            <person name="Han Y."/>
            <person name="Lee W.R."/>
            <person name="Liou J."/>
            <person name="Jiang Y."/>
        </authorList>
    </citation>
    <scope>STRUCTURE BY ELECTRON MICROSCOPY (3.4 ANGSTROMS) IN COMPLEX WITH LAMP1</scope>
    <scope>FUNCTION</scope>
    <scope>TRANSPORTER ACTIVITY</scope>
    <scope>ACTIVITY REGULATION</scope>
    <scope>INTERACTION WITH LAMP1 AND LAMP2</scope>
    <scope>MUTAGENESIS OF THR-395</scope>
</reference>
<feature type="chain" id="PRO_0000282588" description="Endosomal/lysosomal proton channel TMEM175">
    <location>
        <begin position="1"/>
        <end position="504"/>
    </location>
</feature>
<feature type="topological domain" description="Cytoplasmic" evidence="21">
    <location>
        <begin position="1"/>
        <end position="33"/>
    </location>
</feature>
<feature type="transmembrane region" description="Helical; Name=TM1-1" evidence="23 25 26 27 28">
    <location>
        <begin position="34"/>
        <end position="56"/>
    </location>
</feature>
<feature type="topological domain" description="Lumenal" evidence="20">
    <location>
        <begin position="57"/>
        <end position="77"/>
    </location>
</feature>
<feature type="transmembrane region" description="Helical; Name=TM2-1" evidence="23 25 26 27 28">
    <location>
        <begin position="78"/>
        <end position="100"/>
    </location>
</feature>
<feature type="topological domain" description="Cytoplasmic" evidence="20">
    <location>
        <begin position="101"/>
        <end position="106"/>
    </location>
</feature>
<feature type="transmembrane region" description="Helical; Name=TM3-1" evidence="23 25 26 27 28">
    <location>
        <begin position="107"/>
        <end position="128"/>
    </location>
</feature>
<feature type="topological domain" description="Lumenal" evidence="20">
    <location>
        <begin position="129"/>
        <end position="138"/>
    </location>
</feature>
<feature type="transmembrane region" description="Helical; Name=TM4-1" evidence="23 25 26 27 28">
    <location>
        <begin position="139"/>
        <end position="160"/>
    </location>
</feature>
<feature type="topological domain" description="Cytoplasmic" evidence="20">
    <location>
        <begin position="161"/>
        <end position="184"/>
    </location>
</feature>
<feature type="transmembrane region" description="Helical; Name=TM5-1" evidence="2">
    <location>
        <begin position="185"/>
        <end position="205"/>
    </location>
</feature>
<feature type="topological domain" description="Lumenal" evidence="20">
    <location>
        <begin position="206"/>
        <end position="210"/>
    </location>
</feature>
<feature type="transmembrane region" description="Helical; Name=TM6-1" evidence="2">
    <location>
        <begin position="211"/>
        <end position="230"/>
    </location>
</feature>
<feature type="topological domain" description="Cytoplasmic" evidence="20">
    <location>
        <begin position="231"/>
        <end position="257"/>
    </location>
</feature>
<feature type="transmembrane region" description="Helical; Name=TM1-2" evidence="23 25 26 27 28">
    <location>
        <begin position="258"/>
        <end position="282"/>
    </location>
</feature>
<feature type="topological domain" description="Lumenal" evidence="20">
    <location>
        <begin position="283"/>
        <end position="309"/>
    </location>
</feature>
<feature type="transmembrane region" description="Helical; Name=TM2-2" evidence="23 25 26 27 28">
    <location>
        <begin position="310"/>
        <end position="332"/>
    </location>
</feature>
<feature type="topological domain" description="Cytoplasmic" evidence="20">
    <location>
        <begin position="333"/>
        <end position="338"/>
    </location>
</feature>
<feature type="transmembrane region" description="Helical; Name=TM3-2" evidence="23 25 26 27 28">
    <location>
        <begin position="339"/>
        <end position="360"/>
    </location>
</feature>
<feature type="topological domain" description="Lumenal" evidence="20">
    <location>
        <begin position="361"/>
        <end position="375"/>
    </location>
</feature>
<feature type="transmembrane region" description="Helical; Name=TM4-2" evidence="23 25 26 27 28">
    <location>
        <begin position="376"/>
        <end position="396"/>
    </location>
</feature>
<feature type="topological domain" description="Cytoplasmic" evidence="20">
    <location>
        <begin position="397"/>
        <end position="416"/>
    </location>
</feature>
<feature type="transmembrane region" description="Helical; Name=TM5-2" evidence="23 25 26 27 28">
    <location>
        <begin position="417"/>
        <end position="440"/>
    </location>
</feature>
<feature type="topological domain" description="Lumenal" evidence="20">
    <location>
        <begin position="441"/>
        <end position="442"/>
    </location>
</feature>
<feature type="transmembrane region" description="Helical; Name=TM6-2" evidence="23 25 26 27 28">
    <location>
        <begin position="443"/>
        <end position="469"/>
    </location>
</feature>
<feature type="topological domain" description="Cytoplasmic" evidence="21">
    <location>
        <begin position="470"/>
        <end position="504"/>
    </location>
</feature>
<feature type="region of interest" description="Disordered" evidence="3">
    <location>
        <begin position="1"/>
        <end position="27"/>
    </location>
</feature>
<feature type="region of interest" description="Short helix H1-1" evidence="1">
    <location>
        <begin position="58"/>
        <end position="63"/>
    </location>
</feature>
<feature type="region of interest" description="Short helix H2-1" evidence="1">
    <location>
        <begin position="65"/>
        <end position="71"/>
    </location>
</feature>
<feature type="region of interest" description="Short helix H1-2" evidence="1">
    <location>
        <begin position="288"/>
        <end position="296"/>
    </location>
</feature>
<feature type="region of interest" description="Short helix H2-2" evidence="1">
    <location>
        <begin position="298"/>
        <end position="304"/>
    </location>
</feature>
<feature type="region of interest" description="Disordered" evidence="3">
    <location>
        <begin position="483"/>
        <end position="504"/>
    </location>
</feature>
<feature type="short sequence motif" description="RxxxFSD motif 1" evidence="4">
    <location>
        <begin position="35"/>
        <end position="41"/>
    </location>
</feature>
<feature type="short sequence motif" description="RxxxFSD motif 2" evidence="21">
    <location>
        <begin position="260"/>
        <end position="266"/>
    </location>
</feature>
<feature type="compositionally biased region" description="Polar residues" evidence="3">
    <location>
        <begin position="493"/>
        <end position="504"/>
    </location>
</feature>
<feature type="site" description="Hydrophobic filter residue 1-1" evidence="6">
    <location>
        <position position="46"/>
    </location>
</feature>
<feature type="site" description="Hydrophobic filter residue 2-1" evidence="1">
    <location>
        <position position="50"/>
    </location>
</feature>
<feature type="site" description="Hydrophobic filter residue 3-1" evidence="1">
    <location>
        <position position="53"/>
    </location>
</feature>
<feature type="site" description="Hydrophobic filter residue 1-2" evidence="6">
    <location>
        <position position="271"/>
    </location>
</feature>
<feature type="site" description="Hydrophobic filter residue 2-2" evidence="1">
    <location>
        <position position="275"/>
    </location>
</feature>
<feature type="site" description="Hydrophobic filter residue 3-2" evidence="1">
    <location>
        <position position="278"/>
    </location>
</feature>
<feature type="modified residue" description="Phosphothreonine" evidence="30">
    <location>
        <position position="6"/>
    </location>
</feature>
<feature type="splice variant" id="VSP_024213" description="In isoform 2." evidence="16">
    <location>
        <begin position="1"/>
        <end position="116"/>
    </location>
</feature>
<feature type="sequence variant" id="VAR_053873" description="Associated with decreased risk for Parkinson disease; gain-of-function variant; does not affect lysosomal localization; dbSNP:rs34884217." evidence="8 11">
    <original>Q</original>
    <variation>P</variation>
    <location>
        <position position="65"/>
    </location>
</feature>
<feature type="sequence variant" id="VAR_053874" description="Associated with increased risk for Parkinson disease; reduced potassium channel activity; does not affect lysosomal localization; dbSNP:rs34311866." evidence="7 8 11">
    <original>M</original>
    <variation>T</variation>
    <location>
        <position position="393"/>
    </location>
</feature>
<feature type="mutagenesis site" description="Impaired potassium channel activity." evidence="4">
    <original>R</original>
    <variation>A</variation>
    <location>
        <position position="35"/>
    </location>
</feature>
<feature type="mutagenesis site" description="Does not affect proton and potassium channel activity." evidence="12">
    <original>S</original>
    <variation>A</variation>
    <location>
        <position position="38"/>
    </location>
</feature>
<feature type="mutagenesis site" description="Impaired potassium channel activity." evidence="4">
    <original>F</original>
    <variation>V</variation>
    <location>
        <position position="39"/>
    </location>
</feature>
<feature type="mutagenesis site" description="Impaired potassium channel activity." evidence="4">
    <original>S</original>
    <variation>A</variation>
    <location>
        <position position="40"/>
    </location>
</feature>
<feature type="mutagenesis site" description="Abolished proton permeability without altering potassium permeability." evidence="14">
    <original>D</original>
    <variation>A</variation>
    <location>
        <position position="41"/>
    </location>
</feature>
<feature type="mutagenesis site" description="Impaired potassium channel activity." evidence="4">
    <original>D</original>
    <variation>E</variation>
    <variation>N</variation>
    <location>
        <position position="41"/>
    </location>
</feature>
<feature type="mutagenesis site" description="Decreased selectivity for potassium ion; when associated with A-274." evidence="10">
    <original>SIIAT</original>
    <variation>AIIAA</variation>
    <location>
        <begin position="45"/>
        <end position="49"/>
    </location>
</feature>
<feature type="mutagenesis site" description="Reduced potassium channel activity without altering proton channel activity." evidence="12 14">
    <original>S</original>
    <variation>A</variation>
    <location>
        <position position="45"/>
    </location>
</feature>
<feature type="mutagenesis site" description="Decreased selectivity for potassium ion." evidence="9">
    <original>S</original>
    <variation>T</variation>
    <location>
        <position position="45"/>
    </location>
</feature>
<feature type="mutagenesis site" description="Decreased channel activity." evidence="13">
    <original>I</original>
    <variation>A</variation>
    <variation>V</variation>
    <location>
        <position position="46"/>
    </location>
</feature>
<feature type="mutagenesis site" description="Abolished proton and potassium channel activity; when associated with M-271." evidence="12">
    <original>I</original>
    <variation>M</variation>
    <location>
        <position position="46"/>
    </location>
</feature>
<feature type="mutagenesis site" description="Impaired selectivity; can conduct both K(+) and Na(+); when associated with N-271." evidence="6">
    <original>I</original>
    <variation>N</variation>
    <location>
        <position position="46"/>
    </location>
</feature>
<feature type="mutagenesis site" description="Decreased selectivity for potassium ion." evidence="10">
    <original>T</original>
    <variation>A</variation>
    <location>
        <position position="49"/>
    </location>
</feature>
<feature type="mutagenesis site" description="Abolished potassium channel activity and decreased proton channel activity." evidence="12">
    <original>T</original>
    <variation>V</variation>
    <location>
        <position position="49"/>
    </location>
</feature>
<feature type="mutagenesis site" description="Does not affect selectivity; when associated with A-275." evidence="6">
    <original>V</original>
    <variation>A</variation>
    <location>
        <position position="50"/>
    </location>
</feature>
<feature type="mutagenesis site" description="Does not affect selectivity; when associated with A-278." evidence="6">
    <original>L</original>
    <variation>A</variation>
    <location>
        <position position="53"/>
    </location>
</feature>
<feature type="mutagenesis site" description="Reduced channel activation, probably caused by decreased interaction with AKT1; when associated with A-338." evidence="11">
    <original>S</original>
    <variation>A</variation>
    <location>
        <position position="241"/>
    </location>
</feature>
<feature type="mutagenesis site" description="Decreased channel activity." evidence="13">
    <original>I</original>
    <variation>A</variation>
    <variation>V</variation>
    <location>
        <position position="271"/>
    </location>
</feature>
<feature type="mutagenesis site" description="Impaired selectivity; can conduct both K(+) and Na(+); when associated with N-46." evidence="6">
    <original>I</original>
    <variation>N</variation>
    <location>
        <position position="271"/>
    </location>
</feature>
<feature type="mutagenesis site" description="Abolished proton and potassium channel activity." evidence="12">
    <original>I</original>
    <variation>W</variation>
    <location>
        <position position="271"/>
    </location>
</feature>
<feature type="mutagenesis site" description="Decreased selectivity for potassium ion. Abolished proton and potassium channel activity. Decreased selectivity for potassium ion; when associated with 45-A--A-49." evidence="10 12">
    <original>T</original>
    <variation>A</variation>
    <location>
        <position position="274"/>
    </location>
</feature>
<feature type="mutagenesis site" description="Abolished proton and potassium channel activity." evidence="12">
    <original>T</original>
    <variation>V</variation>
    <location>
        <position position="274"/>
    </location>
</feature>
<feature type="mutagenesis site" description="Decreased selectivity for potassium ion." evidence="9">
    <original>T</original>
    <variation>V</variation>
    <location>
        <position position="274"/>
    </location>
</feature>
<feature type="mutagenesis site" description="Does not affect selectivity; when associated with A-50." evidence="6">
    <original>L</original>
    <variation>A</variation>
    <location>
        <position position="275"/>
    </location>
</feature>
<feature type="mutagenesis site" description="Does not affect selectivity; when associated with A-53." evidence="6">
    <original>L</original>
    <variation>A</variation>
    <location>
        <position position="278"/>
    </location>
</feature>
<feature type="mutagenesis site" description="Abolished proton and potassium channel activity." evidence="12">
    <original>D</original>
    <variation>A</variation>
    <location>
        <position position="279"/>
    </location>
</feature>
<feature type="mutagenesis site" description="Abolished potassium channel activity without affecting proton channel activity." evidence="12">
    <original>D</original>
    <variation>N</variation>
    <location>
        <position position="279"/>
    </location>
</feature>
<feature type="mutagenesis site" description="Abolished proton and potassium channel activity." evidence="12">
    <original>D</original>
    <variation>A</variation>
    <location>
        <position position="283"/>
    </location>
</feature>
<feature type="mutagenesis site" description="Abolished potassium channel activity without affecting proton channel activity." evidence="12">
    <original>D</original>
    <variation>N</variation>
    <location>
        <position position="283"/>
    </location>
</feature>
<feature type="mutagenesis site" description="Reduced potassium channel activity without affecting proton channel activity." evidence="12">
    <original>R</original>
    <variation>A</variation>
    <variation>Q</variation>
    <location>
        <position position="309"/>
    </location>
</feature>
<feature type="mutagenesis site" description="Reduced potassium and proton channel activity." evidence="12">
    <original>H</original>
    <variation>A</variation>
    <location>
        <position position="327"/>
    </location>
</feature>
<feature type="mutagenesis site" description="Reduced potassium channel activity without affecting proton channel activity." evidence="12">
    <original>H</original>
    <variation>A</variation>
    <location>
        <position position="328"/>
    </location>
</feature>
<feature type="mutagenesis site" description="Reduced channel activation, probably caused by decreased interaction with AKT1; when associated with A-241." evidence="11">
    <original>T</original>
    <variation>A</variation>
    <location>
        <position position="338"/>
    </location>
</feature>
<feature type="mutagenesis site" description="Reduced potassium channel activity without affecting proton channel activity." evidence="12">
    <original>N</original>
    <variation>L</variation>
    <location>
        <position position="345"/>
    </location>
</feature>
<feature type="mutagenesis site" description="Increased potassium and proton channel activity." evidence="12">
    <original>Q</original>
    <variation>L</variation>
    <location>
        <position position="360"/>
    </location>
</feature>
<feature type="mutagenesis site" description="Does not affect potassium channel activity." evidence="11">
    <original>M</original>
    <variation>I</variation>
    <location>
        <position position="393"/>
    </location>
</feature>
<feature type="mutagenesis site" description="Reduced potassium channel activity." evidence="11">
    <original>M</original>
    <variation>W</variation>
    <location>
        <position position="393"/>
    </location>
</feature>
<feature type="mutagenesis site" description="Abolished interaction with LAMP1 and subsequent inhibition." evidence="15">
    <original>T</original>
    <variation>W</variation>
    <location>
        <position position="395"/>
    </location>
</feature>
<feature type="mutagenesis site" description="Increased potassium and proton channel activity." evidence="12">
    <original>H</original>
    <variation>A</variation>
    <location>
        <position position="449"/>
    </location>
</feature>
<feature type="helix" evidence="35">
    <location>
        <begin position="34"/>
        <end position="48"/>
    </location>
</feature>
<feature type="helix" evidence="35">
    <location>
        <begin position="49"/>
        <end position="52"/>
    </location>
</feature>
<feature type="helix" evidence="35">
    <location>
        <begin position="53"/>
        <end position="56"/>
    </location>
</feature>
<feature type="helix" evidence="35">
    <location>
        <begin position="64"/>
        <end position="66"/>
    </location>
</feature>
<feature type="helix" evidence="35">
    <location>
        <begin position="67"/>
        <end position="101"/>
    </location>
</feature>
<feature type="helix" evidence="35">
    <location>
        <begin position="107"/>
        <end position="120"/>
    </location>
</feature>
<feature type="helix" evidence="35">
    <location>
        <begin position="123"/>
        <end position="132"/>
    </location>
</feature>
<feature type="strand" evidence="37">
    <location>
        <begin position="133"/>
        <end position="135"/>
    </location>
</feature>
<feature type="helix" evidence="35">
    <location>
        <begin position="138"/>
        <end position="163"/>
    </location>
</feature>
<feature type="helix" evidence="35">
    <location>
        <begin position="165"/>
        <end position="167"/>
    </location>
</feature>
<feature type="helix" evidence="35">
    <location>
        <begin position="170"/>
        <end position="172"/>
    </location>
</feature>
<feature type="strand" evidence="31">
    <location>
        <begin position="175"/>
        <end position="177"/>
    </location>
</feature>
<feature type="helix" evidence="31">
    <location>
        <begin position="181"/>
        <end position="204"/>
    </location>
</feature>
<feature type="turn" evidence="34">
    <location>
        <begin position="208"/>
        <end position="211"/>
    </location>
</feature>
<feature type="helix" evidence="31">
    <location>
        <begin position="212"/>
        <end position="223"/>
    </location>
</feature>
<feature type="helix" evidence="32">
    <location>
        <begin position="224"/>
        <end position="227"/>
    </location>
</feature>
<feature type="strand" evidence="38">
    <location>
        <begin position="254"/>
        <end position="256"/>
    </location>
</feature>
<feature type="helix" evidence="35">
    <location>
        <begin position="258"/>
        <end position="283"/>
    </location>
</feature>
<feature type="helix" evidence="35">
    <location>
        <begin position="290"/>
        <end position="293"/>
    </location>
</feature>
<feature type="turn" evidence="35">
    <location>
        <begin position="294"/>
        <end position="297"/>
    </location>
</feature>
<feature type="helix" evidence="35">
    <location>
        <begin position="299"/>
        <end position="304"/>
    </location>
</feature>
<feature type="helix" evidence="35">
    <location>
        <begin position="307"/>
        <end position="331"/>
    </location>
</feature>
<feature type="strand" evidence="33">
    <location>
        <begin position="333"/>
        <end position="335"/>
    </location>
</feature>
<feature type="helix" evidence="35">
    <location>
        <begin position="339"/>
        <end position="352"/>
    </location>
</feature>
<feature type="helix" evidence="35">
    <location>
        <begin position="355"/>
        <end position="361"/>
    </location>
</feature>
<feature type="turn" evidence="36">
    <location>
        <begin position="364"/>
        <end position="367"/>
    </location>
</feature>
<feature type="helix" evidence="35">
    <location>
        <begin position="369"/>
        <end position="398"/>
    </location>
</feature>
<feature type="helix" evidence="35">
    <location>
        <begin position="401"/>
        <end position="404"/>
    </location>
</feature>
<feature type="helix" evidence="35">
    <location>
        <begin position="407"/>
        <end position="409"/>
    </location>
</feature>
<feature type="strand" evidence="35">
    <location>
        <begin position="413"/>
        <end position="415"/>
    </location>
</feature>
<feature type="helix" evidence="35">
    <location>
        <begin position="416"/>
        <end position="439"/>
    </location>
</feature>
<feature type="helix" evidence="35">
    <location>
        <begin position="441"/>
        <end position="460"/>
    </location>
</feature>
<feature type="helix" evidence="35">
    <location>
        <begin position="462"/>
        <end position="475"/>
    </location>
</feature>
<proteinExistence type="evidence at protein level"/>